<name>AROQ_YERPA</name>
<keyword id="KW-0028">Amino-acid biosynthesis</keyword>
<keyword id="KW-0057">Aromatic amino acid biosynthesis</keyword>
<keyword id="KW-0456">Lyase</keyword>
<sequence>MSDKFHILLLNGPNLNLLGTREPEKYGYTTLAEIVSQLEIQAQGMDVALSHLQSNAEHALIDSIHQARGNTDFILINPAAFTHTSVALRDALLGVQIPFIEIHLSNVHAREPFRHHSYLSDIAVGVICGLGADGYNFALQAAVNRLSKSN</sequence>
<protein>
    <recommendedName>
        <fullName evidence="1">3-dehydroquinate dehydratase</fullName>
        <shortName evidence="1">3-dehydroquinase</shortName>
        <ecNumber evidence="1">4.2.1.10</ecNumber>
    </recommendedName>
    <alternativeName>
        <fullName evidence="1">Type II DHQase</fullName>
    </alternativeName>
</protein>
<gene>
    <name evidence="1" type="primary">aroQ</name>
    <name type="ordered locus">YPA_3673</name>
</gene>
<organism>
    <name type="scientific">Yersinia pestis bv. Antiqua (strain Antiqua)</name>
    <dbReference type="NCBI Taxonomy" id="360102"/>
    <lineage>
        <taxon>Bacteria</taxon>
        <taxon>Pseudomonadati</taxon>
        <taxon>Pseudomonadota</taxon>
        <taxon>Gammaproteobacteria</taxon>
        <taxon>Enterobacterales</taxon>
        <taxon>Yersiniaceae</taxon>
        <taxon>Yersinia</taxon>
    </lineage>
</organism>
<accession>Q1C1N7</accession>
<evidence type="ECO:0000255" key="1">
    <source>
        <dbReference type="HAMAP-Rule" id="MF_00169"/>
    </source>
</evidence>
<proteinExistence type="inferred from homology"/>
<feature type="chain" id="PRO_1000023535" description="3-dehydroquinate dehydratase">
    <location>
        <begin position="1"/>
        <end position="150"/>
    </location>
</feature>
<feature type="active site" description="Proton acceptor" evidence="1">
    <location>
        <position position="26"/>
    </location>
</feature>
<feature type="active site" description="Proton donor" evidence="1">
    <location>
        <position position="103"/>
    </location>
</feature>
<feature type="binding site" evidence="1">
    <location>
        <position position="77"/>
    </location>
    <ligand>
        <name>substrate</name>
    </ligand>
</feature>
<feature type="binding site" evidence="1">
    <location>
        <position position="83"/>
    </location>
    <ligand>
        <name>substrate</name>
    </ligand>
</feature>
<feature type="binding site" evidence="1">
    <location>
        <position position="90"/>
    </location>
    <ligand>
        <name>substrate</name>
    </ligand>
</feature>
<feature type="binding site" evidence="1">
    <location>
        <begin position="104"/>
        <end position="105"/>
    </location>
    <ligand>
        <name>substrate</name>
    </ligand>
</feature>
<feature type="binding site" evidence="1">
    <location>
        <position position="114"/>
    </location>
    <ligand>
        <name>substrate</name>
    </ligand>
</feature>
<feature type="site" description="Transition state stabilizer" evidence="1">
    <location>
        <position position="21"/>
    </location>
</feature>
<comment type="function">
    <text evidence="1">Catalyzes a trans-dehydration via an enolate intermediate.</text>
</comment>
<comment type="catalytic activity">
    <reaction evidence="1">
        <text>3-dehydroquinate = 3-dehydroshikimate + H2O</text>
        <dbReference type="Rhea" id="RHEA:21096"/>
        <dbReference type="ChEBI" id="CHEBI:15377"/>
        <dbReference type="ChEBI" id="CHEBI:16630"/>
        <dbReference type="ChEBI" id="CHEBI:32364"/>
        <dbReference type="EC" id="4.2.1.10"/>
    </reaction>
</comment>
<comment type="pathway">
    <text evidence="1">Metabolic intermediate biosynthesis; chorismate biosynthesis; chorismate from D-erythrose 4-phosphate and phosphoenolpyruvate: step 3/7.</text>
</comment>
<comment type="subunit">
    <text evidence="1">Homododecamer.</text>
</comment>
<comment type="similarity">
    <text evidence="1">Belongs to the type-II 3-dehydroquinase family.</text>
</comment>
<dbReference type="EC" id="4.2.1.10" evidence="1"/>
<dbReference type="EMBL" id="CP000308">
    <property type="protein sequence ID" value="ABG15635.1"/>
    <property type="molecule type" value="Genomic_DNA"/>
</dbReference>
<dbReference type="RefSeq" id="WP_002210071.1">
    <property type="nucleotide sequence ID" value="NZ_CP009906.1"/>
</dbReference>
<dbReference type="SMR" id="Q1C1N7"/>
<dbReference type="GeneID" id="57975085"/>
<dbReference type="KEGG" id="ypa:YPA_3673"/>
<dbReference type="UniPathway" id="UPA00053">
    <property type="reaction ID" value="UER00086"/>
</dbReference>
<dbReference type="Proteomes" id="UP000001971">
    <property type="component" value="Chromosome"/>
</dbReference>
<dbReference type="GO" id="GO:0003855">
    <property type="term" value="F:3-dehydroquinate dehydratase activity"/>
    <property type="evidence" value="ECO:0007669"/>
    <property type="project" value="UniProtKB-UniRule"/>
</dbReference>
<dbReference type="GO" id="GO:0008652">
    <property type="term" value="P:amino acid biosynthetic process"/>
    <property type="evidence" value="ECO:0007669"/>
    <property type="project" value="UniProtKB-KW"/>
</dbReference>
<dbReference type="GO" id="GO:0009073">
    <property type="term" value="P:aromatic amino acid family biosynthetic process"/>
    <property type="evidence" value="ECO:0007669"/>
    <property type="project" value="UniProtKB-KW"/>
</dbReference>
<dbReference type="GO" id="GO:0009423">
    <property type="term" value="P:chorismate biosynthetic process"/>
    <property type="evidence" value="ECO:0007669"/>
    <property type="project" value="UniProtKB-UniRule"/>
</dbReference>
<dbReference type="GO" id="GO:0019631">
    <property type="term" value="P:quinate catabolic process"/>
    <property type="evidence" value="ECO:0007669"/>
    <property type="project" value="TreeGrafter"/>
</dbReference>
<dbReference type="CDD" id="cd00466">
    <property type="entry name" value="DHQase_II"/>
    <property type="match status" value="1"/>
</dbReference>
<dbReference type="Gene3D" id="3.40.50.9100">
    <property type="entry name" value="Dehydroquinase, class II"/>
    <property type="match status" value="1"/>
</dbReference>
<dbReference type="HAMAP" id="MF_00169">
    <property type="entry name" value="AroQ"/>
    <property type="match status" value="1"/>
</dbReference>
<dbReference type="InterPro" id="IPR001874">
    <property type="entry name" value="DHquinase_II"/>
</dbReference>
<dbReference type="InterPro" id="IPR018509">
    <property type="entry name" value="DHquinase_II_CS"/>
</dbReference>
<dbReference type="InterPro" id="IPR036441">
    <property type="entry name" value="DHquinase_II_sf"/>
</dbReference>
<dbReference type="NCBIfam" id="TIGR01088">
    <property type="entry name" value="aroQ"/>
    <property type="match status" value="1"/>
</dbReference>
<dbReference type="NCBIfam" id="NF003804">
    <property type="entry name" value="PRK05395.1-1"/>
    <property type="match status" value="1"/>
</dbReference>
<dbReference type="NCBIfam" id="NF003805">
    <property type="entry name" value="PRK05395.1-2"/>
    <property type="match status" value="1"/>
</dbReference>
<dbReference type="NCBIfam" id="NF003806">
    <property type="entry name" value="PRK05395.1-3"/>
    <property type="match status" value="1"/>
</dbReference>
<dbReference type="NCBIfam" id="NF003807">
    <property type="entry name" value="PRK05395.1-4"/>
    <property type="match status" value="1"/>
</dbReference>
<dbReference type="PANTHER" id="PTHR21272">
    <property type="entry name" value="CATABOLIC 3-DEHYDROQUINASE"/>
    <property type="match status" value="1"/>
</dbReference>
<dbReference type="PANTHER" id="PTHR21272:SF3">
    <property type="entry name" value="CATABOLIC 3-DEHYDROQUINASE"/>
    <property type="match status" value="1"/>
</dbReference>
<dbReference type="Pfam" id="PF01220">
    <property type="entry name" value="DHquinase_II"/>
    <property type="match status" value="1"/>
</dbReference>
<dbReference type="PIRSF" id="PIRSF001399">
    <property type="entry name" value="DHquinase_II"/>
    <property type="match status" value="1"/>
</dbReference>
<dbReference type="SUPFAM" id="SSF52304">
    <property type="entry name" value="Type II 3-dehydroquinate dehydratase"/>
    <property type="match status" value="1"/>
</dbReference>
<dbReference type="PROSITE" id="PS01029">
    <property type="entry name" value="DEHYDROQUINASE_II"/>
    <property type="match status" value="1"/>
</dbReference>
<reference key="1">
    <citation type="journal article" date="2006" name="J. Bacteriol.">
        <title>Complete genome sequence of Yersinia pestis strains Antiqua and Nepal516: evidence of gene reduction in an emerging pathogen.</title>
        <authorList>
            <person name="Chain P.S.G."/>
            <person name="Hu P."/>
            <person name="Malfatti S.A."/>
            <person name="Radnedge L."/>
            <person name="Larimer F."/>
            <person name="Vergez L.M."/>
            <person name="Worsham P."/>
            <person name="Chu M.C."/>
            <person name="Andersen G.L."/>
        </authorList>
    </citation>
    <scope>NUCLEOTIDE SEQUENCE [LARGE SCALE GENOMIC DNA]</scope>
    <source>
        <strain>Antiqua</strain>
    </source>
</reference>